<keyword id="KW-0456">Lyase</keyword>
<keyword id="KW-0663">Pyridoxal phosphate</keyword>
<keyword id="KW-0704">Schiff base</keyword>
<reference key="1">
    <citation type="submission" date="2007-04" db="EMBL/GenBank/DDBJ databases">
        <title>Complete sequence of Roseiflexus sp. RS-1.</title>
        <authorList>
            <consortium name="US DOE Joint Genome Institute"/>
            <person name="Copeland A."/>
            <person name="Lucas S."/>
            <person name="Lapidus A."/>
            <person name="Barry K."/>
            <person name="Detter J.C."/>
            <person name="Glavina del Rio T."/>
            <person name="Hammon N."/>
            <person name="Israni S."/>
            <person name="Dalin E."/>
            <person name="Tice H."/>
            <person name="Pitluck S."/>
            <person name="Chertkov O."/>
            <person name="Brettin T."/>
            <person name="Bruce D."/>
            <person name="Han C."/>
            <person name="Schmutz J."/>
            <person name="Larimer F."/>
            <person name="Land M."/>
            <person name="Hauser L."/>
            <person name="Kyrpides N."/>
            <person name="Mikhailova N."/>
            <person name="Bryant D.A."/>
            <person name="Richardson P."/>
        </authorList>
    </citation>
    <scope>NUCLEOTIDE SEQUENCE [LARGE SCALE GENOMIC DNA]</scope>
    <source>
        <strain>RS-1</strain>
    </source>
</reference>
<dbReference type="EC" id="4.3.3.6" evidence="1"/>
<dbReference type="EMBL" id="CP000686">
    <property type="protein sequence ID" value="ABQ91597.1"/>
    <property type="molecule type" value="Genomic_DNA"/>
</dbReference>
<dbReference type="RefSeq" id="WP_011957941.1">
    <property type="nucleotide sequence ID" value="NC_009523.1"/>
</dbReference>
<dbReference type="SMR" id="A5UY94"/>
<dbReference type="STRING" id="357808.RoseRS_3236"/>
<dbReference type="KEGG" id="rrs:RoseRS_3236"/>
<dbReference type="eggNOG" id="COG0214">
    <property type="taxonomic scope" value="Bacteria"/>
</dbReference>
<dbReference type="HOGENOM" id="CLU_055352_1_0_0"/>
<dbReference type="OrthoDB" id="9772545at2"/>
<dbReference type="UniPathway" id="UPA00245"/>
<dbReference type="Proteomes" id="UP000006554">
    <property type="component" value="Chromosome"/>
</dbReference>
<dbReference type="GO" id="GO:0036381">
    <property type="term" value="F:pyridoxal 5'-phosphate synthase (glutamine hydrolysing) activity"/>
    <property type="evidence" value="ECO:0007669"/>
    <property type="project" value="UniProtKB-UniRule"/>
</dbReference>
<dbReference type="GO" id="GO:0006520">
    <property type="term" value="P:amino acid metabolic process"/>
    <property type="evidence" value="ECO:0007669"/>
    <property type="project" value="TreeGrafter"/>
</dbReference>
<dbReference type="GO" id="GO:0042823">
    <property type="term" value="P:pyridoxal phosphate biosynthetic process"/>
    <property type="evidence" value="ECO:0007669"/>
    <property type="project" value="UniProtKB-UniRule"/>
</dbReference>
<dbReference type="GO" id="GO:0008615">
    <property type="term" value="P:pyridoxine biosynthetic process"/>
    <property type="evidence" value="ECO:0007669"/>
    <property type="project" value="TreeGrafter"/>
</dbReference>
<dbReference type="CDD" id="cd04727">
    <property type="entry name" value="pdxS"/>
    <property type="match status" value="1"/>
</dbReference>
<dbReference type="FunFam" id="3.20.20.70:FF:000001">
    <property type="entry name" value="Pyridoxine biosynthesis protein PDX1"/>
    <property type="match status" value="1"/>
</dbReference>
<dbReference type="Gene3D" id="3.20.20.70">
    <property type="entry name" value="Aldolase class I"/>
    <property type="match status" value="1"/>
</dbReference>
<dbReference type="HAMAP" id="MF_01824">
    <property type="entry name" value="PdxS"/>
    <property type="match status" value="1"/>
</dbReference>
<dbReference type="InterPro" id="IPR013785">
    <property type="entry name" value="Aldolase_TIM"/>
</dbReference>
<dbReference type="InterPro" id="IPR001852">
    <property type="entry name" value="PdxS/SNZ"/>
</dbReference>
<dbReference type="InterPro" id="IPR033755">
    <property type="entry name" value="PdxS/SNZ_N"/>
</dbReference>
<dbReference type="InterPro" id="IPR011060">
    <property type="entry name" value="RibuloseP-bd_barrel"/>
</dbReference>
<dbReference type="NCBIfam" id="NF003215">
    <property type="entry name" value="PRK04180.1"/>
    <property type="match status" value="1"/>
</dbReference>
<dbReference type="NCBIfam" id="TIGR00343">
    <property type="entry name" value="pyridoxal 5'-phosphate synthase lyase subunit PdxS"/>
    <property type="match status" value="1"/>
</dbReference>
<dbReference type="PANTHER" id="PTHR31829">
    <property type="entry name" value="PYRIDOXAL 5'-PHOSPHATE SYNTHASE SUBUNIT SNZ1-RELATED"/>
    <property type="match status" value="1"/>
</dbReference>
<dbReference type="PANTHER" id="PTHR31829:SF0">
    <property type="entry name" value="PYRIDOXAL 5'-PHOSPHATE SYNTHASE SUBUNIT SNZ1-RELATED"/>
    <property type="match status" value="1"/>
</dbReference>
<dbReference type="Pfam" id="PF01680">
    <property type="entry name" value="SOR_SNZ"/>
    <property type="match status" value="1"/>
</dbReference>
<dbReference type="PIRSF" id="PIRSF029271">
    <property type="entry name" value="Pdx1"/>
    <property type="match status" value="1"/>
</dbReference>
<dbReference type="SUPFAM" id="SSF51366">
    <property type="entry name" value="Ribulose-phoshate binding barrel"/>
    <property type="match status" value="1"/>
</dbReference>
<dbReference type="PROSITE" id="PS01235">
    <property type="entry name" value="PDXS_SNZ_1"/>
    <property type="match status" value="1"/>
</dbReference>
<dbReference type="PROSITE" id="PS51129">
    <property type="entry name" value="PDXS_SNZ_2"/>
    <property type="match status" value="1"/>
</dbReference>
<feature type="chain" id="PRO_1000070394" description="Pyridoxal 5'-phosphate synthase subunit PdxS">
    <location>
        <begin position="1"/>
        <end position="293"/>
    </location>
</feature>
<feature type="active site" description="Schiff-base intermediate with D-ribose 5-phosphate" evidence="1">
    <location>
        <position position="80"/>
    </location>
</feature>
<feature type="binding site" evidence="1">
    <location>
        <position position="23"/>
    </location>
    <ligand>
        <name>D-ribose 5-phosphate</name>
        <dbReference type="ChEBI" id="CHEBI:78346"/>
    </ligand>
</feature>
<feature type="binding site" evidence="1">
    <location>
        <position position="152"/>
    </location>
    <ligand>
        <name>D-ribose 5-phosphate</name>
        <dbReference type="ChEBI" id="CHEBI:78346"/>
    </ligand>
</feature>
<feature type="binding site" evidence="1">
    <location>
        <position position="164"/>
    </location>
    <ligand>
        <name>D-glyceraldehyde 3-phosphate</name>
        <dbReference type="ChEBI" id="CHEBI:59776"/>
    </ligand>
</feature>
<feature type="binding site" evidence="1">
    <location>
        <position position="213"/>
    </location>
    <ligand>
        <name>D-ribose 5-phosphate</name>
        <dbReference type="ChEBI" id="CHEBI:78346"/>
    </ligand>
</feature>
<feature type="binding site" evidence="1">
    <location>
        <begin position="234"/>
        <end position="235"/>
    </location>
    <ligand>
        <name>D-ribose 5-phosphate</name>
        <dbReference type="ChEBI" id="CHEBI:78346"/>
    </ligand>
</feature>
<accession>A5UY94</accession>
<sequence length="293" mass="31602">MDKSTWTTKVGLAQMLKGGVIMDVVTPEQARIAEEAGAVAVMALERVPADIRAQGGVARMSDPELILAIKEAVTIPVMAKARIGHFVEAQILEALGIDYIDESEVLTPADEEHHINKHKFRVPFVCGCRNLGEALRRVAEGAAMLRTKGEAGTGNVVEAVRHARAVYSEIRRLQSMDEDELFTYAKNIQAPYELVRQVAETGRLPVVNFAAGGIATPADAALLMQLGVDGVFVGSGIFKSGDPARRARAIVAATTHYNEPEIIAEVSRGLGEAMVGIEISKIPHDQLMAERGW</sequence>
<proteinExistence type="inferred from homology"/>
<comment type="function">
    <text evidence="1">Catalyzes the formation of pyridoxal 5'-phosphate from ribose 5-phosphate (RBP), glyceraldehyde 3-phosphate (G3P) and ammonia. The ammonia is provided by the PdxT subunit. Can also use ribulose 5-phosphate and dihydroxyacetone phosphate as substrates, resulting from enzyme-catalyzed isomerization of RBP and G3P, respectively.</text>
</comment>
<comment type="catalytic activity">
    <reaction evidence="1">
        <text>aldehydo-D-ribose 5-phosphate + D-glyceraldehyde 3-phosphate + L-glutamine = pyridoxal 5'-phosphate + L-glutamate + phosphate + 3 H2O + H(+)</text>
        <dbReference type="Rhea" id="RHEA:31507"/>
        <dbReference type="ChEBI" id="CHEBI:15377"/>
        <dbReference type="ChEBI" id="CHEBI:15378"/>
        <dbReference type="ChEBI" id="CHEBI:29985"/>
        <dbReference type="ChEBI" id="CHEBI:43474"/>
        <dbReference type="ChEBI" id="CHEBI:58273"/>
        <dbReference type="ChEBI" id="CHEBI:58359"/>
        <dbReference type="ChEBI" id="CHEBI:59776"/>
        <dbReference type="ChEBI" id="CHEBI:597326"/>
        <dbReference type="EC" id="4.3.3.6"/>
    </reaction>
</comment>
<comment type="pathway">
    <text evidence="1">Cofactor biosynthesis; pyridoxal 5'-phosphate biosynthesis.</text>
</comment>
<comment type="subunit">
    <text evidence="1">In the presence of PdxT, forms a dodecamer of heterodimers.</text>
</comment>
<comment type="similarity">
    <text evidence="1">Belongs to the PdxS/SNZ family.</text>
</comment>
<gene>
    <name evidence="1" type="primary">pdxS</name>
    <name type="ordered locus">RoseRS_3236</name>
</gene>
<evidence type="ECO:0000255" key="1">
    <source>
        <dbReference type="HAMAP-Rule" id="MF_01824"/>
    </source>
</evidence>
<organism>
    <name type="scientific">Roseiflexus sp. (strain RS-1)</name>
    <dbReference type="NCBI Taxonomy" id="357808"/>
    <lineage>
        <taxon>Bacteria</taxon>
        <taxon>Bacillati</taxon>
        <taxon>Chloroflexota</taxon>
        <taxon>Chloroflexia</taxon>
        <taxon>Chloroflexales</taxon>
        <taxon>Roseiflexineae</taxon>
        <taxon>Roseiflexaceae</taxon>
        <taxon>Roseiflexus</taxon>
    </lineage>
</organism>
<protein>
    <recommendedName>
        <fullName evidence="1">Pyridoxal 5'-phosphate synthase subunit PdxS</fullName>
        <shortName evidence="1">PLP synthase subunit PdxS</shortName>
        <ecNumber evidence="1">4.3.3.6</ecNumber>
    </recommendedName>
    <alternativeName>
        <fullName evidence="1">Pdx1</fullName>
    </alternativeName>
</protein>
<name>PDXS_ROSS1</name>